<evidence type="ECO:0000255" key="1">
    <source>
        <dbReference type="HAMAP-Rule" id="MF_00339"/>
    </source>
</evidence>
<accession>A6QAB4</accession>
<proteinExistence type="inferred from homology"/>
<gene>
    <name evidence="1" type="primary">pfkA</name>
    <name type="ordered locus">SUN_1472</name>
</gene>
<comment type="function">
    <text evidence="1">Catalyzes the phosphorylation of D-fructose 6-phosphate to fructose 1,6-bisphosphate by ATP, the first committing step of glycolysis.</text>
</comment>
<comment type="catalytic activity">
    <reaction evidence="1">
        <text>beta-D-fructose 6-phosphate + ATP = beta-D-fructose 1,6-bisphosphate + ADP + H(+)</text>
        <dbReference type="Rhea" id="RHEA:16109"/>
        <dbReference type="ChEBI" id="CHEBI:15378"/>
        <dbReference type="ChEBI" id="CHEBI:30616"/>
        <dbReference type="ChEBI" id="CHEBI:32966"/>
        <dbReference type="ChEBI" id="CHEBI:57634"/>
        <dbReference type="ChEBI" id="CHEBI:456216"/>
        <dbReference type="EC" id="2.7.1.11"/>
    </reaction>
</comment>
<comment type="cofactor">
    <cofactor evidence="1">
        <name>Mg(2+)</name>
        <dbReference type="ChEBI" id="CHEBI:18420"/>
    </cofactor>
</comment>
<comment type="activity regulation">
    <text evidence="1">Allosterically activated by ADP and other diphosphonucleosides, and allosterically inhibited by phosphoenolpyruvate.</text>
</comment>
<comment type="pathway">
    <text evidence="1">Carbohydrate degradation; glycolysis; D-glyceraldehyde 3-phosphate and glycerone phosphate from D-glucose: step 3/4.</text>
</comment>
<comment type="subunit">
    <text evidence="1">Homotetramer.</text>
</comment>
<comment type="subcellular location">
    <subcellularLocation>
        <location evidence="1">Cytoplasm</location>
    </subcellularLocation>
</comment>
<comment type="similarity">
    <text evidence="1">Belongs to the phosphofructokinase type A (PFKA) family. ATP-dependent PFK group I subfamily. Prokaryotic clade 'B1' sub-subfamily.</text>
</comment>
<dbReference type="EC" id="2.7.1.11" evidence="1"/>
<dbReference type="EMBL" id="AP009179">
    <property type="protein sequence ID" value="BAF72423.1"/>
    <property type="molecule type" value="Genomic_DNA"/>
</dbReference>
<dbReference type="RefSeq" id="WP_011981156.1">
    <property type="nucleotide sequence ID" value="NC_009663.1"/>
</dbReference>
<dbReference type="SMR" id="A6QAB4"/>
<dbReference type="STRING" id="387093.SUN_1472"/>
<dbReference type="KEGG" id="sun:SUN_1472"/>
<dbReference type="eggNOG" id="COG0205">
    <property type="taxonomic scope" value="Bacteria"/>
</dbReference>
<dbReference type="HOGENOM" id="CLU_020655_0_1_7"/>
<dbReference type="OrthoDB" id="9802503at2"/>
<dbReference type="UniPathway" id="UPA00109">
    <property type="reaction ID" value="UER00182"/>
</dbReference>
<dbReference type="Proteomes" id="UP000006378">
    <property type="component" value="Chromosome"/>
</dbReference>
<dbReference type="GO" id="GO:0005945">
    <property type="term" value="C:6-phosphofructokinase complex"/>
    <property type="evidence" value="ECO:0007669"/>
    <property type="project" value="TreeGrafter"/>
</dbReference>
<dbReference type="GO" id="GO:0003872">
    <property type="term" value="F:6-phosphofructokinase activity"/>
    <property type="evidence" value="ECO:0007669"/>
    <property type="project" value="UniProtKB-UniRule"/>
</dbReference>
<dbReference type="GO" id="GO:0016208">
    <property type="term" value="F:AMP binding"/>
    <property type="evidence" value="ECO:0007669"/>
    <property type="project" value="TreeGrafter"/>
</dbReference>
<dbReference type="GO" id="GO:0005524">
    <property type="term" value="F:ATP binding"/>
    <property type="evidence" value="ECO:0007669"/>
    <property type="project" value="UniProtKB-KW"/>
</dbReference>
<dbReference type="GO" id="GO:0070095">
    <property type="term" value="F:fructose-6-phosphate binding"/>
    <property type="evidence" value="ECO:0007669"/>
    <property type="project" value="TreeGrafter"/>
</dbReference>
<dbReference type="GO" id="GO:0042802">
    <property type="term" value="F:identical protein binding"/>
    <property type="evidence" value="ECO:0007669"/>
    <property type="project" value="TreeGrafter"/>
</dbReference>
<dbReference type="GO" id="GO:0046872">
    <property type="term" value="F:metal ion binding"/>
    <property type="evidence" value="ECO:0007669"/>
    <property type="project" value="UniProtKB-KW"/>
</dbReference>
<dbReference type="GO" id="GO:0048029">
    <property type="term" value="F:monosaccharide binding"/>
    <property type="evidence" value="ECO:0007669"/>
    <property type="project" value="TreeGrafter"/>
</dbReference>
<dbReference type="GO" id="GO:0061621">
    <property type="term" value="P:canonical glycolysis"/>
    <property type="evidence" value="ECO:0007669"/>
    <property type="project" value="TreeGrafter"/>
</dbReference>
<dbReference type="GO" id="GO:0030388">
    <property type="term" value="P:fructose 1,6-bisphosphate metabolic process"/>
    <property type="evidence" value="ECO:0007669"/>
    <property type="project" value="TreeGrafter"/>
</dbReference>
<dbReference type="GO" id="GO:0006002">
    <property type="term" value="P:fructose 6-phosphate metabolic process"/>
    <property type="evidence" value="ECO:0007669"/>
    <property type="project" value="InterPro"/>
</dbReference>
<dbReference type="FunFam" id="3.40.50.460:FF:000002">
    <property type="entry name" value="ATP-dependent 6-phosphofructokinase"/>
    <property type="match status" value="1"/>
</dbReference>
<dbReference type="Gene3D" id="3.40.50.450">
    <property type="match status" value="1"/>
</dbReference>
<dbReference type="Gene3D" id="3.40.50.460">
    <property type="entry name" value="Phosphofructokinase domain"/>
    <property type="match status" value="1"/>
</dbReference>
<dbReference type="HAMAP" id="MF_00339">
    <property type="entry name" value="Phosphofructokinase_I_B1"/>
    <property type="match status" value="1"/>
</dbReference>
<dbReference type="InterPro" id="IPR022953">
    <property type="entry name" value="ATP_PFK"/>
</dbReference>
<dbReference type="InterPro" id="IPR012003">
    <property type="entry name" value="ATP_PFK_prok-type"/>
</dbReference>
<dbReference type="InterPro" id="IPR012828">
    <property type="entry name" value="PFKA_ATP_prok"/>
</dbReference>
<dbReference type="InterPro" id="IPR015912">
    <property type="entry name" value="Phosphofructokinase_CS"/>
</dbReference>
<dbReference type="InterPro" id="IPR000023">
    <property type="entry name" value="Phosphofructokinase_dom"/>
</dbReference>
<dbReference type="InterPro" id="IPR035966">
    <property type="entry name" value="PKF_sf"/>
</dbReference>
<dbReference type="NCBIfam" id="NF002872">
    <property type="entry name" value="PRK03202.1"/>
    <property type="match status" value="1"/>
</dbReference>
<dbReference type="PANTHER" id="PTHR13697:SF4">
    <property type="entry name" value="ATP-DEPENDENT 6-PHOSPHOFRUCTOKINASE"/>
    <property type="match status" value="1"/>
</dbReference>
<dbReference type="PANTHER" id="PTHR13697">
    <property type="entry name" value="PHOSPHOFRUCTOKINASE"/>
    <property type="match status" value="1"/>
</dbReference>
<dbReference type="Pfam" id="PF00365">
    <property type="entry name" value="PFK"/>
    <property type="match status" value="1"/>
</dbReference>
<dbReference type="PIRSF" id="PIRSF000532">
    <property type="entry name" value="ATP_PFK_prok"/>
    <property type="match status" value="1"/>
</dbReference>
<dbReference type="PRINTS" id="PR00476">
    <property type="entry name" value="PHFRCTKINASE"/>
</dbReference>
<dbReference type="SUPFAM" id="SSF53784">
    <property type="entry name" value="Phosphofructokinase"/>
    <property type="match status" value="1"/>
</dbReference>
<dbReference type="PROSITE" id="PS00433">
    <property type="entry name" value="PHOSPHOFRUCTOKINASE"/>
    <property type="match status" value="1"/>
</dbReference>
<organism>
    <name type="scientific">Sulfurovum sp. (strain NBC37-1)</name>
    <dbReference type="NCBI Taxonomy" id="387093"/>
    <lineage>
        <taxon>Bacteria</taxon>
        <taxon>Pseudomonadati</taxon>
        <taxon>Campylobacterota</taxon>
        <taxon>Epsilonproteobacteria</taxon>
        <taxon>Campylobacterales</taxon>
        <taxon>Sulfurovaceae</taxon>
        <taxon>Sulfurovum</taxon>
    </lineage>
</organism>
<protein>
    <recommendedName>
        <fullName evidence="1">ATP-dependent 6-phosphofructokinase</fullName>
        <shortName evidence="1">ATP-PFK</shortName>
        <shortName evidence="1">Phosphofructokinase</shortName>
        <ecNumber evidence="1">2.7.1.11</ecNumber>
    </recommendedName>
    <alternativeName>
        <fullName evidence="1">Phosphohexokinase</fullName>
    </alternativeName>
</protein>
<name>PFKA_SULNB</name>
<keyword id="KW-0021">Allosteric enzyme</keyword>
<keyword id="KW-0067">ATP-binding</keyword>
<keyword id="KW-0963">Cytoplasm</keyword>
<keyword id="KW-0324">Glycolysis</keyword>
<keyword id="KW-0418">Kinase</keyword>
<keyword id="KW-0460">Magnesium</keyword>
<keyword id="KW-0479">Metal-binding</keyword>
<keyword id="KW-0547">Nucleotide-binding</keyword>
<keyword id="KW-0808">Transferase</keyword>
<reference key="1">
    <citation type="journal article" date="2007" name="Proc. Natl. Acad. Sci. U.S.A.">
        <title>Deep-sea vent epsilon-proteobacterial genomes provide insights into emergence of pathogens.</title>
        <authorList>
            <person name="Nakagawa S."/>
            <person name="Takaki Y."/>
            <person name="Shimamura S."/>
            <person name="Reysenbach A.-L."/>
            <person name="Takai K."/>
            <person name="Horikoshi K."/>
        </authorList>
    </citation>
    <scope>NUCLEOTIDE SEQUENCE [LARGE SCALE GENOMIC DNA]</scope>
    <source>
        <strain>NBC37-1</strain>
    </source>
</reference>
<feature type="chain" id="PRO_1000059804" description="ATP-dependent 6-phosphofructokinase">
    <location>
        <begin position="1"/>
        <end position="327"/>
    </location>
</feature>
<feature type="active site" description="Proton acceptor" evidence="1">
    <location>
        <position position="129"/>
    </location>
</feature>
<feature type="binding site" evidence="1">
    <location>
        <position position="11"/>
    </location>
    <ligand>
        <name>ATP</name>
        <dbReference type="ChEBI" id="CHEBI:30616"/>
    </ligand>
</feature>
<feature type="binding site" evidence="1">
    <location>
        <begin position="72"/>
        <end position="73"/>
    </location>
    <ligand>
        <name>ATP</name>
        <dbReference type="ChEBI" id="CHEBI:30616"/>
    </ligand>
</feature>
<feature type="binding site" evidence="1">
    <location>
        <begin position="102"/>
        <end position="105"/>
    </location>
    <ligand>
        <name>ATP</name>
        <dbReference type="ChEBI" id="CHEBI:30616"/>
    </ligand>
</feature>
<feature type="binding site" evidence="1">
    <location>
        <position position="103"/>
    </location>
    <ligand>
        <name>Mg(2+)</name>
        <dbReference type="ChEBI" id="CHEBI:18420"/>
        <note>catalytic</note>
    </ligand>
</feature>
<feature type="binding site" description="in other chain" evidence="1">
    <location>
        <begin position="127"/>
        <end position="129"/>
    </location>
    <ligand>
        <name>substrate</name>
        <note>ligand shared between dimeric partners</note>
    </ligand>
</feature>
<feature type="binding site" evidence="1">
    <location>
        <position position="156"/>
    </location>
    <ligand>
        <name>ADP</name>
        <dbReference type="ChEBI" id="CHEBI:456216"/>
        <note>allosteric activator</note>
    </ligand>
</feature>
<feature type="binding site" evidence="1">
    <location>
        <position position="164"/>
    </location>
    <ligand>
        <name>substrate</name>
        <note>ligand shared between dimeric partners</note>
    </ligand>
</feature>
<feature type="binding site" description="in other chain" evidence="1">
    <location>
        <begin position="171"/>
        <end position="173"/>
    </location>
    <ligand>
        <name>substrate</name>
        <note>ligand shared between dimeric partners</note>
    </ligand>
</feature>
<feature type="binding site" evidence="1">
    <location>
        <begin position="187"/>
        <end position="189"/>
    </location>
    <ligand>
        <name>ADP</name>
        <dbReference type="ChEBI" id="CHEBI:456216"/>
        <note>allosteric activator</note>
    </ligand>
</feature>
<feature type="binding site" description="in other chain" evidence="1">
    <location>
        <position position="224"/>
    </location>
    <ligand>
        <name>substrate</name>
        <note>ligand shared between dimeric partners</note>
    </ligand>
</feature>
<feature type="binding site" evidence="1">
    <location>
        <position position="245"/>
    </location>
    <ligand>
        <name>substrate</name>
        <note>ligand shared between dimeric partners</note>
    </ligand>
</feature>
<feature type="binding site" description="in other chain" evidence="1">
    <location>
        <begin position="251"/>
        <end position="254"/>
    </location>
    <ligand>
        <name>substrate</name>
        <note>ligand shared between dimeric partners</note>
    </ligand>
</feature>
<sequence>MKNIAILCSGGDVSGMNAALKRFVEYAFDQGLTPFFVENGYEGLIDNKISKADYSDVAGIISIGGTKIRTSRSERFKEISYRQIALENLRGHGIDGLIVLGGDGSFKGMQKLSDECNDIGFIGIPSTIDNDIAGTQYCLGVDTALNAIRVAIDSIRDTASSFGRAFVIEVMGRECGYLALVSALTSGAEMCLIPEVPYNLEVYKEEFLEEKEQGRTYFIAVVSEALKNTEQIVRWFEEEIDIESRMTVLGHIQRGGIPTVHDRLMAFHFVTSAIDALREGTKSKVVCYDDGMFICKDIKDVAFKKYMIDEDLLALGREFESPQHKQV</sequence>